<organism>
    <name type="scientific">Escherichia coli O7:K1 (strain IAI39 / ExPEC)</name>
    <dbReference type="NCBI Taxonomy" id="585057"/>
    <lineage>
        <taxon>Bacteria</taxon>
        <taxon>Pseudomonadati</taxon>
        <taxon>Pseudomonadota</taxon>
        <taxon>Gammaproteobacteria</taxon>
        <taxon>Enterobacterales</taxon>
        <taxon>Enterobacteriaceae</taxon>
        <taxon>Escherichia</taxon>
    </lineage>
</organism>
<protein>
    <recommendedName>
        <fullName evidence="1">3-hydroxyacyl-[acyl-carrier-protein] dehydratase FabZ</fullName>
        <ecNumber evidence="1">4.2.1.59</ecNumber>
    </recommendedName>
    <alternativeName>
        <fullName evidence="1">(3R)-hydroxymyristoyl-[acyl-carrier-protein] dehydratase</fullName>
        <shortName evidence="1">(3R)-hydroxymyristoyl-ACP dehydrase</shortName>
    </alternativeName>
    <alternativeName>
        <fullName evidence="1">Beta-hydroxyacyl-ACP dehydratase</fullName>
    </alternativeName>
</protein>
<evidence type="ECO:0000255" key="1">
    <source>
        <dbReference type="HAMAP-Rule" id="MF_00406"/>
    </source>
</evidence>
<dbReference type="EC" id="4.2.1.59" evidence="1"/>
<dbReference type="EMBL" id="CU928164">
    <property type="protein sequence ID" value="CAR16323.1"/>
    <property type="molecule type" value="Genomic_DNA"/>
</dbReference>
<dbReference type="RefSeq" id="WP_000210739.1">
    <property type="nucleotide sequence ID" value="NC_011750.1"/>
</dbReference>
<dbReference type="RefSeq" id="YP_002406229.1">
    <property type="nucleotide sequence ID" value="NC_011750.1"/>
</dbReference>
<dbReference type="SMR" id="B7NIE2"/>
<dbReference type="STRING" id="585057.ECIAI39_0183"/>
<dbReference type="GeneID" id="93777245"/>
<dbReference type="KEGG" id="ect:ECIAI39_0183"/>
<dbReference type="PATRIC" id="fig|585057.6.peg.196"/>
<dbReference type="HOGENOM" id="CLU_078912_1_0_6"/>
<dbReference type="Proteomes" id="UP000000749">
    <property type="component" value="Chromosome"/>
</dbReference>
<dbReference type="GO" id="GO:0005737">
    <property type="term" value="C:cytoplasm"/>
    <property type="evidence" value="ECO:0007669"/>
    <property type="project" value="UniProtKB-SubCell"/>
</dbReference>
<dbReference type="GO" id="GO:0016020">
    <property type="term" value="C:membrane"/>
    <property type="evidence" value="ECO:0007669"/>
    <property type="project" value="GOC"/>
</dbReference>
<dbReference type="GO" id="GO:0019171">
    <property type="term" value="F:(3R)-hydroxyacyl-[acyl-carrier-protein] dehydratase activity"/>
    <property type="evidence" value="ECO:0007669"/>
    <property type="project" value="UniProtKB-EC"/>
</dbReference>
<dbReference type="GO" id="GO:0006633">
    <property type="term" value="P:fatty acid biosynthetic process"/>
    <property type="evidence" value="ECO:0007669"/>
    <property type="project" value="UniProtKB-UniRule"/>
</dbReference>
<dbReference type="GO" id="GO:0009245">
    <property type="term" value="P:lipid A biosynthetic process"/>
    <property type="evidence" value="ECO:0007669"/>
    <property type="project" value="UniProtKB-UniRule"/>
</dbReference>
<dbReference type="CDD" id="cd01288">
    <property type="entry name" value="FabZ"/>
    <property type="match status" value="1"/>
</dbReference>
<dbReference type="FunFam" id="3.10.129.10:FF:000001">
    <property type="entry name" value="3-hydroxyacyl-[acyl-carrier-protein] dehydratase FabZ"/>
    <property type="match status" value="1"/>
</dbReference>
<dbReference type="Gene3D" id="3.10.129.10">
    <property type="entry name" value="Hotdog Thioesterase"/>
    <property type="match status" value="1"/>
</dbReference>
<dbReference type="HAMAP" id="MF_00406">
    <property type="entry name" value="FabZ"/>
    <property type="match status" value="1"/>
</dbReference>
<dbReference type="InterPro" id="IPR013114">
    <property type="entry name" value="FabA_FabZ"/>
</dbReference>
<dbReference type="InterPro" id="IPR010084">
    <property type="entry name" value="FabZ"/>
</dbReference>
<dbReference type="InterPro" id="IPR029069">
    <property type="entry name" value="HotDog_dom_sf"/>
</dbReference>
<dbReference type="NCBIfam" id="TIGR01750">
    <property type="entry name" value="fabZ"/>
    <property type="match status" value="1"/>
</dbReference>
<dbReference type="NCBIfam" id="NF000582">
    <property type="entry name" value="PRK00006.1"/>
    <property type="match status" value="1"/>
</dbReference>
<dbReference type="PANTHER" id="PTHR30272">
    <property type="entry name" value="3-HYDROXYACYL-[ACYL-CARRIER-PROTEIN] DEHYDRATASE"/>
    <property type="match status" value="1"/>
</dbReference>
<dbReference type="PANTHER" id="PTHR30272:SF1">
    <property type="entry name" value="3-HYDROXYACYL-[ACYL-CARRIER-PROTEIN] DEHYDRATASE"/>
    <property type="match status" value="1"/>
</dbReference>
<dbReference type="Pfam" id="PF07977">
    <property type="entry name" value="FabA"/>
    <property type="match status" value="1"/>
</dbReference>
<dbReference type="SUPFAM" id="SSF54637">
    <property type="entry name" value="Thioesterase/thiol ester dehydrase-isomerase"/>
    <property type="match status" value="1"/>
</dbReference>
<feature type="chain" id="PRO_1000197302" description="3-hydroxyacyl-[acyl-carrier-protein] dehydratase FabZ">
    <location>
        <begin position="1"/>
        <end position="151"/>
    </location>
</feature>
<feature type="active site" evidence="1">
    <location>
        <position position="54"/>
    </location>
</feature>
<reference key="1">
    <citation type="journal article" date="2009" name="PLoS Genet.">
        <title>Organised genome dynamics in the Escherichia coli species results in highly diverse adaptive paths.</title>
        <authorList>
            <person name="Touchon M."/>
            <person name="Hoede C."/>
            <person name="Tenaillon O."/>
            <person name="Barbe V."/>
            <person name="Baeriswyl S."/>
            <person name="Bidet P."/>
            <person name="Bingen E."/>
            <person name="Bonacorsi S."/>
            <person name="Bouchier C."/>
            <person name="Bouvet O."/>
            <person name="Calteau A."/>
            <person name="Chiapello H."/>
            <person name="Clermont O."/>
            <person name="Cruveiller S."/>
            <person name="Danchin A."/>
            <person name="Diard M."/>
            <person name="Dossat C."/>
            <person name="Karoui M.E."/>
            <person name="Frapy E."/>
            <person name="Garry L."/>
            <person name="Ghigo J.M."/>
            <person name="Gilles A.M."/>
            <person name="Johnson J."/>
            <person name="Le Bouguenec C."/>
            <person name="Lescat M."/>
            <person name="Mangenot S."/>
            <person name="Martinez-Jehanne V."/>
            <person name="Matic I."/>
            <person name="Nassif X."/>
            <person name="Oztas S."/>
            <person name="Petit M.A."/>
            <person name="Pichon C."/>
            <person name="Rouy Z."/>
            <person name="Ruf C.S."/>
            <person name="Schneider D."/>
            <person name="Tourret J."/>
            <person name="Vacherie B."/>
            <person name="Vallenet D."/>
            <person name="Medigue C."/>
            <person name="Rocha E.P.C."/>
            <person name="Denamur E."/>
        </authorList>
    </citation>
    <scope>NUCLEOTIDE SEQUENCE [LARGE SCALE GENOMIC DNA]</scope>
    <source>
        <strain>IAI39 / ExPEC</strain>
    </source>
</reference>
<comment type="function">
    <text evidence="1">Involved in unsaturated fatty acids biosynthesis. Catalyzes the dehydration of short chain beta-hydroxyacyl-ACPs and long chain saturated and unsaturated beta-hydroxyacyl-ACPs.</text>
</comment>
<comment type="catalytic activity">
    <reaction evidence="1">
        <text>a (3R)-hydroxyacyl-[ACP] = a (2E)-enoyl-[ACP] + H2O</text>
        <dbReference type="Rhea" id="RHEA:13097"/>
        <dbReference type="Rhea" id="RHEA-COMP:9925"/>
        <dbReference type="Rhea" id="RHEA-COMP:9945"/>
        <dbReference type="ChEBI" id="CHEBI:15377"/>
        <dbReference type="ChEBI" id="CHEBI:78784"/>
        <dbReference type="ChEBI" id="CHEBI:78827"/>
        <dbReference type="EC" id="4.2.1.59"/>
    </reaction>
</comment>
<comment type="subunit">
    <text evidence="1">Oligomer.</text>
</comment>
<comment type="subcellular location">
    <subcellularLocation>
        <location evidence="1">Cytoplasm</location>
    </subcellularLocation>
</comment>
<comment type="PTM">
    <text evidence="1">The N-terminus is blocked.</text>
</comment>
<comment type="similarity">
    <text evidence="1">Belongs to the thioester dehydratase family. FabZ subfamily.</text>
</comment>
<name>FABZ_ECO7I</name>
<accession>B7NIE2</accession>
<gene>
    <name evidence="1" type="primary">fabZ</name>
    <name type="ordered locus">ECIAI39_0183</name>
</gene>
<sequence length="151" mass="17033">MTTNTHTLQIEEILELLPHRFPFLLVDRVLDFEEGRFLRAVKNVSVNEPFFQGHFPGKPIFPGVLILEAMAQATGILAFKSVGKLEPGELYYFAGIDEARFKRPVVPGDQMIMEVTFEKTRRGLTRFKGVALVDGKVVCEATMMCARSREA</sequence>
<keyword id="KW-0963">Cytoplasm</keyword>
<keyword id="KW-0441">Lipid A biosynthesis</keyword>
<keyword id="KW-0444">Lipid biosynthesis</keyword>
<keyword id="KW-0443">Lipid metabolism</keyword>
<keyword id="KW-0456">Lyase</keyword>
<proteinExistence type="inferred from homology"/>